<reference key="1">
    <citation type="submission" date="2006-06" db="EMBL/GenBank/DDBJ databases">
        <title>Complete sequence of Pseudoalteromonas atlantica T6c.</title>
        <authorList>
            <consortium name="US DOE Joint Genome Institute"/>
            <person name="Copeland A."/>
            <person name="Lucas S."/>
            <person name="Lapidus A."/>
            <person name="Barry K."/>
            <person name="Detter J.C."/>
            <person name="Glavina del Rio T."/>
            <person name="Hammon N."/>
            <person name="Israni S."/>
            <person name="Dalin E."/>
            <person name="Tice H."/>
            <person name="Pitluck S."/>
            <person name="Saunders E."/>
            <person name="Brettin T."/>
            <person name="Bruce D."/>
            <person name="Han C."/>
            <person name="Tapia R."/>
            <person name="Gilna P."/>
            <person name="Schmutz J."/>
            <person name="Larimer F."/>
            <person name="Land M."/>
            <person name="Hauser L."/>
            <person name="Kyrpides N."/>
            <person name="Kim E."/>
            <person name="Karls A.C."/>
            <person name="Bartlett D."/>
            <person name="Higgins B.P."/>
            <person name="Richardson P."/>
        </authorList>
    </citation>
    <scope>NUCLEOTIDE SEQUENCE [LARGE SCALE GENOMIC DNA]</scope>
    <source>
        <strain>T6c / ATCC BAA-1087</strain>
    </source>
</reference>
<proteinExistence type="inferred from homology"/>
<comment type="function">
    <text evidence="1">The RuvA-RuvB-RuvC complex processes Holliday junction (HJ) DNA during genetic recombination and DNA repair, while the RuvA-RuvB complex plays an important role in the rescue of blocked DNA replication forks via replication fork reversal (RFR). RuvA specifically binds to HJ cruciform DNA, conferring on it an open structure. The RuvB hexamer acts as an ATP-dependent pump, pulling dsDNA into and through the RuvAB complex. RuvB forms 2 homohexamers on either side of HJ DNA bound by 1 or 2 RuvA tetramers; 4 subunits per hexamer contact DNA at a time. Coordinated motions by a converter formed by DNA-disengaged RuvB subunits stimulates ATP hydrolysis and nucleotide exchange. Immobilization of the converter enables RuvB to convert the ATP-contained energy into a lever motion, pulling 2 nucleotides of DNA out of the RuvA tetramer per ATP hydrolyzed, thus driving DNA branch migration. The RuvB motors rotate together with the DNA substrate, which together with the progressing nucleotide cycle form the mechanistic basis for DNA recombination by continuous HJ branch migration. Branch migration allows RuvC to scan DNA until it finds its consensus sequence, where it cleaves and resolves cruciform DNA.</text>
</comment>
<comment type="catalytic activity">
    <reaction evidence="1">
        <text>ATP + H2O = ADP + phosphate + H(+)</text>
        <dbReference type="Rhea" id="RHEA:13065"/>
        <dbReference type="ChEBI" id="CHEBI:15377"/>
        <dbReference type="ChEBI" id="CHEBI:15378"/>
        <dbReference type="ChEBI" id="CHEBI:30616"/>
        <dbReference type="ChEBI" id="CHEBI:43474"/>
        <dbReference type="ChEBI" id="CHEBI:456216"/>
    </reaction>
</comment>
<comment type="subunit">
    <text evidence="1">Homohexamer. Forms an RuvA(8)-RuvB(12)-Holliday junction (HJ) complex. HJ DNA is sandwiched between 2 RuvA tetramers; dsDNA enters through RuvA and exits via RuvB. An RuvB hexamer assembles on each DNA strand where it exits the tetramer. Each RuvB hexamer is contacted by two RuvA subunits (via domain III) on 2 adjacent RuvB subunits; this complex drives branch migration. In the full resolvosome a probable DNA-RuvA(4)-RuvB(12)-RuvC(2) complex forms which resolves the HJ.</text>
</comment>
<comment type="subcellular location">
    <subcellularLocation>
        <location evidence="1">Cytoplasm</location>
    </subcellularLocation>
</comment>
<comment type="domain">
    <text evidence="1">Has 3 domains, the large (RuvB-L) and small ATPase (RuvB-S) domains and the C-terminal head (RuvB-H) domain. The head domain binds DNA, while the ATPase domains jointly bind ATP, ADP or are empty depending on the state of the subunit in the translocation cycle. During a single DNA translocation step the structure of each domain remains the same, but their relative positions change.</text>
</comment>
<comment type="similarity">
    <text evidence="1">Belongs to the RuvB family.</text>
</comment>
<feature type="chain" id="PRO_1000001445" description="Holliday junction branch migration complex subunit RuvB">
    <location>
        <begin position="1"/>
        <end position="335"/>
    </location>
</feature>
<feature type="region of interest" description="Large ATPase domain (RuvB-L)" evidence="1">
    <location>
        <begin position="4"/>
        <end position="184"/>
    </location>
</feature>
<feature type="region of interest" description="Small ATPAse domain (RuvB-S)" evidence="1">
    <location>
        <begin position="185"/>
        <end position="255"/>
    </location>
</feature>
<feature type="region of interest" description="Head domain (RuvB-H)" evidence="1">
    <location>
        <begin position="258"/>
        <end position="335"/>
    </location>
</feature>
<feature type="binding site" evidence="1">
    <location>
        <position position="23"/>
    </location>
    <ligand>
        <name>ATP</name>
        <dbReference type="ChEBI" id="CHEBI:30616"/>
    </ligand>
</feature>
<feature type="binding site" evidence="1">
    <location>
        <position position="24"/>
    </location>
    <ligand>
        <name>ATP</name>
        <dbReference type="ChEBI" id="CHEBI:30616"/>
    </ligand>
</feature>
<feature type="binding site" evidence="1">
    <location>
        <position position="65"/>
    </location>
    <ligand>
        <name>ATP</name>
        <dbReference type="ChEBI" id="CHEBI:30616"/>
    </ligand>
</feature>
<feature type="binding site" evidence="1">
    <location>
        <position position="68"/>
    </location>
    <ligand>
        <name>ATP</name>
        <dbReference type="ChEBI" id="CHEBI:30616"/>
    </ligand>
</feature>
<feature type="binding site" evidence="1">
    <location>
        <position position="69"/>
    </location>
    <ligand>
        <name>ATP</name>
        <dbReference type="ChEBI" id="CHEBI:30616"/>
    </ligand>
</feature>
<feature type="binding site" evidence="1">
    <location>
        <position position="69"/>
    </location>
    <ligand>
        <name>Mg(2+)</name>
        <dbReference type="ChEBI" id="CHEBI:18420"/>
    </ligand>
</feature>
<feature type="binding site" evidence="1">
    <location>
        <position position="70"/>
    </location>
    <ligand>
        <name>ATP</name>
        <dbReference type="ChEBI" id="CHEBI:30616"/>
    </ligand>
</feature>
<feature type="binding site" evidence="1">
    <location>
        <begin position="131"/>
        <end position="133"/>
    </location>
    <ligand>
        <name>ATP</name>
        <dbReference type="ChEBI" id="CHEBI:30616"/>
    </ligand>
</feature>
<feature type="binding site" evidence="1">
    <location>
        <position position="174"/>
    </location>
    <ligand>
        <name>ATP</name>
        <dbReference type="ChEBI" id="CHEBI:30616"/>
    </ligand>
</feature>
<feature type="binding site" evidence="1">
    <location>
        <position position="184"/>
    </location>
    <ligand>
        <name>ATP</name>
        <dbReference type="ChEBI" id="CHEBI:30616"/>
    </ligand>
</feature>
<feature type="binding site" evidence="1">
    <location>
        <position position="221"/>
    </location>
    <ligand>
        <name>ATP</name>
        <dbReference type="ChEBI" id="CHEBI:30616"/>
    </ligand>
</feature>
<feature type="binding site" evidence="1">
    <location>
        <position position="294"/>
    </location>
    <ligand>
        <name>DNA</name>
        <dbReference type="ChEBI" id="CHEBI:16991"/>
    </ligand>
</feature>
<feature type="binding site" evidence="1">
    <location>
        <position position="313"/>
    </location>
    <ligand>
        <name>DNA</name>
        <dbReference type="ChEBI" id="CHEBI:16991"/>
    </ligand>
</feature>
<feature type="binding site" evidence="1">
    <location>
        <position position="318"/>
    </location>
    <ligand>
        <name>DNA</name>
        <dbReference type="ChEBI" id="CHEBI:16991"/>
    </ligand>
</feature>
<name>RUVB_PSEA6</name>
<keyword id="KW-0067">ATP-binding</keyword>
<keyword id="KW-0963">Cytoplasm</keyword>
<keyword id="KW-0227">DNA damage</keyword>
<keyword id="KW-0233">DNA recombination</keyword>
<keyword id="KW-0234">DNA repair</keyword>
<keyword id="KW-0238">DNA-binding</keyword>
<keyword id="KW-0378">Hydrolase</keyword>
<keyword id="KW-0547">Nucleotide-binding</keyword>
<sequence>MIEADRLIQPTALREDEVIDRAIRPKMLADYTGQDHVCEQMDIFIQAARKRSDALDHLLIFGPPGLGKTTLANIVANEMGVSIKTTSGPVLEKAGDLAALLTNLEENDVLFIDEIHRLSPVVEEILYPAMEDYQLDIMIGEGPAARSIKLELPPFTLIGATTRAGSLTSPLRDRFGIVQRLEFYNIKDLTQIVKRSAHFLELNLDEEGAMEIAKRSRGTPRISNRLLRRVRDYAEIKANGEISSDVASAALDMLDVDKEGFDYMDRKLLTTIIDKFMGGPVGLDNLAAAIGEERDTIEDVIEPFLIQQGFLQRTPRGRIVSQRAYLHFGYDYEPN</sequence>
<evidence type="ECO:0000255" key="1">
    <source>
        <dbReference type="HAMAP-Rule" id="MF_00016"/>
    </source>
</evidence>
<gene>
    <name evidence="1" type="primary">ruvB</name>
    <name type="ordered locus">Patl_2944</name>
</gene>
<accession>Q15RN6</accession>
<dbReference type="EC" id="3.6.4.-" evidence="1"/>
<dbReference type="EMBL" id="CP000388">
    <property type="protein sequence ID" value="ABG41452.1"/>
    <property type="molecule type" value="Genomic_DNA"/>
</dbReference>
<dbReference type="RefSeq" id="WP_011575707.1">
    <property type="nucleotide sequence ID" value="NC_008228.1"/>
</dbReference>
<dbReference type="SMR" id="Q15RN6"/>
<dbReference type="STRING" id="342610.Patl_2944"/>
<dbReference type="KEGG" id="pat:Patl_2944"/>
<dbReference type="eggNOG" id="COG2255">
    <property type="taxonomic scope" value="Bacteria"/>
</dbReference>
<dbReference type="HOGENOM" id="CLU_055599_1_0_6"/>
<dbReference type="OrthoDB" id="9804478at2"/>
<dbReference type="Proteomes" id="UP000001981">
    <property type="component" value="Chromosome"/>
</dbReference>
<dbReference type="GO" id="GO:0005737">
    <property type="term" value="C:cytoplasm"/>
    <property type="evidence" value="ECO:0007669"/>
    <property type="project" value="UniProtKB-SubCell"/>
</dbReference>
<dbReference type="GO" id="GO:0048476">
    <property type="term" value="C:Holliday junction resolvase complex"/>
    <property type="evidence" value="ECO:0007669"/>
    <property type="project" value="UniProtKB-UniRule"/>
</dbReference>
<dbReference type="GO" id="GO:0005524">
    <property type="term" value="F:ATP binding"/>
    <property type="evidence" value="ECO:0007669"/>
    <property type="project" value="UniProtKB-UniRule"/>
</dbReference>
<dbReference type="GO" id="GO:0016887">
    <property type="term" value="F:ATP hydrolysis activity"/>
    <property type="evidence" value="ECO:0007669"/>
    <property type="project" value="InterPro"/>
</dbReference>
<dbReference type="GO" id="GO:0000400">
    <property type="term" value="F:four-way junction DNA binding"/>
    <property type="evidence" value="ECO:0007669"/>
    <property type="project" value="UniProtKB-UniRule"/>
</dbReference>
<dbReference type="GO" id="GO:0009378">
    <property type="term" value="F:four-way junction helicase activity"/>
    <property type="evidence" value="ECO:0007669"/>
    <property type="project" value="InterPro"/>
</dbReference>
<dbReference type="GO" id="GO:0006310">
    <property type="term" value="P:DNA recombination"/>
    <property type="evidence" value="ECO:0007669"/>
    <property type="project" value="UniProtKB-UniRule"/>
</dbReference>
<dbReference type="GO" id="GO:0006281">
    <property type="term" value="P:DNA repair"/>
    <property type="evidence" value="ECO:0007669"/>
    <property type="project" value="UniProtKB-UniRule"/>
</dbReference>
<dbReference type="CDD" id="cd00009">
    <property type="entry name" value="AAA"/>
    <property type="match status" value="1"/>
</dbReference>
<dbReference type="FunFam" id="1.10.10.10:FF:000086">
    <property type="entry name" value="Holliday junction ATP-dependent DNA helicase RuvB"/>
    <property type="match status" value="1"/>
</dbReference>
<dbReference type="FunFam" id="1.10.8.60:FF:000023">
    <property type="entry name" value="Holliday junction ATP-dependent DNA helicase RuvB"/>
    <property type="match status" value="1"/>
</dbReference>
<dbReference type="FunFam" id="3.40.50.300:FF:000073">
    <property type="entry name" value="Holliday junction ATP-dependent DNA helicase RuvB"/>
    <property type="match status" value="1"/>
</dbReference>
<dbReference type="Gene3D" id="1.10.8.60">
    <property type="match status" value="1"/>
</dbReference>
<dbReference type="Gene3D" id="3.40.50.300">
    <property type="entry name" value="P-loop containing nucleotide triphosphate hydrolases"/>
    <property type="match status" value="1"/>
</dbReference>
<dbReference type="Gene3D" id="1.10.10.10">
    <property type="entry name" value="Winged helix-like DNA-binding domain superfamily/Winged helix DNA-binding domain"/>
    <property type="match status" value="1"/>
</dbReference>
<dbReference type="HAMAP" id="MF_00016">
    <property type="entry name" value="DNA_HJ_migration_RuvB"/>
    <property type="match status" value="1"/>
</dbReference>
<dbReference type="InterPro" id="IPR003593">
    <property type="entry name" value="AAA+_ATPase"/>
</dbReference>
<dbReference type="InterPro" id="IPR041445">
    <property type="entry name" value="AAA_lid_4"/>
</dbReference>
<dbReference type="InterPro" id="IPR004605">
    <property type="entry name" value="DNA_helicase_Holl-junc_RuvB"/>
</dbReference>
<dbReference type="InterPro" id="IPR027417">
    <property type="entry name" value="P-loop_NTPase"/>
</dbReference>
<dbReference type="InterPro" id="IPR008824">
    <property type="entry name" value="RuvB-like_N"/>
</dbReference>
<dbReference type="InterPro" id="IPR008823">
    <property type="entry name" value="RuvB_C"/>
</dbReference>
<dbReference type="InterPro" id="IPR036388">
    <property type="entry name" value="WH-like_DNA-bd_sf"/>
</dbReference>
<dbReference type="InterPro" id="IPR036390">
    <property type="entry name" value="WH_DNA-bd_sf"/>
</dbReference>
<dbReference type="NCBIfam" id="NF000868">
    <property type="entry name" value="PRK00080.1"/>
    <property type="match status" value="1"/>
</dbReference>
<dbReference type="NCBIfam" id="TIGR00635">
    <property type="entry name" value="ruvB"/>
    <property type="match status" value="1"/>
</dbReference>
<dbReference type="PANTHER" id="PTHR42848">
    <property type="match status" value="1"/>
</dbReference>
<dbReference type="PANTHER" id="PTHR42848:SF1">
    <property type="entry name" value="HOLLIDAY JUNCTION BRANCH MIGRATION COMPLEX SUBUNIT RUVB"/>
    <property type="match status" value="1"/>
</dbReference>
<dbReference type="Pfam" id="PF17864">
    <property type="entry name" value="AAA_lid_4"/>
    <property type="match status" value="1"/>
</dbReference>
<dbReference type="Pfam" id="PF05491">
    <property type="entry name" value="RuvB_C"/>
    <property type="match status" value="1"/>
</dbReference>
<dbReference type="Pfam" id="PF05496">
    <property type="entry name" value="RuvB_N"/>
    <property type="match status" value="1"/>
</dbReference>
<dbReference type="SMART" id="SM00382">
    <property type="entry name" value="AAA"/>
    <property type="match status" value="1"/>
</dbReference>
<dbReference type="SUPFAM" id="SSF52540">
    <property type="entry name" value="P-loop containing nucleoside triphosphate hydrolases"/>
    <property type="match status" value="1"/>
</dbReference>
<dbReference type="SUPFAM" id="SSF46785">
    <property type="entry name" value="Winged helix' DNA-binding domain"/>
    <property type="match status" value="1"/>
</dbReference>
<protein>
    <recommendedName>
        <fullName evidence="1">Holliday junction branch migration complex subunit RuvB</fullName>
        <ecNumber evidence="1">3.6.4.-</ecNumber>
    </recommendedName>
</protein>
<organism>
    <name type="scientific">Pseudoalteromonas atlantica (strain T6c / ATCC BAA-1087)</name>
    <dbReference type="NCBI Taxonomy" id="3042615"/>
    <lineage>
        <taxon>Bacteria</taxon>
        <taxon>Pseudomonadati</taxon>
        <taxon>Pseudomonadota</taxon>
        <taxon>Gammaproteobacteria</taxon>
        <taxon>Alteromonadales</taxon>
        <taxon>Alteromonadaceae</taxon>
        <taxon>Paraglaciecola</taxon>
    </lineage>
</organism>